<name>RL7_BUCAP</name>
<organism>
    <name type="scientific">Buchnera aphidicola subsp. Schizaphis graminum (strain Sg)</name>
    <dbReference type="NCBI Taxonomy" id="198804"/>
    <lineage>
        <taxon>Bacteria</taxon>
        <taxon>Pseudomonadati</taxon>
        <taxon>Pseudomonadota</taxon>
        <taxon>Gammaproteobacteria</taxon>
        <taxon>Enterobacterales</taxon>
        <taxon>Erwiniaceae</taxon>
        <taxon>Buchnera</taxon>
    </lineage>
</organism>
<dbReference type="EMBL" id="AE013218">
    <property type="protein sequence ID" value="AAM67607.1"/>
    <property type="molecule type" value="Genomic_DNA"/>
</dbReference>
<dbReference type="EMBL" id="Z11913">
    <property type="protein sequence ID" value="CAA77969.1"/>
    <property type="molecule type" value="Genomic_DNA"/>
</dbReference>
<dbReference type="PIR" id="S32679">
    <property type="entry name" value="S32679"/>
</dbReference>
<dbReference type="RefSeq" id="WP_044006039.1">
    <property type="nucleotide sequence ID" value="NC_004061.1"/>
</dbReference>
<dbReference type="SMR" id="P41188"/>
<dbReference type="STRING" id="198804.BUsg_036"/>
<dbReference type="GeneID" id="93003499"/>
<dbReference type="KEGG" id="bas:BUsg_036"/>
<dbReference type="eggNOG" id="COG0222">
    <property type="taxonomic scope" value="Bacteria"/>
</dbReference>
<dbReference type="HOGENOM" id="CLU_086499_3_2_6"/>
<dbReference type="Proteomes" id="UP000000416">
    <property type="component" value="Chromosome"/>
</dbReference>
<dbReference type="GO" id="GO:0022625">
    <property type="term" value="C:cytosolic large ribosomal subunit"/>
    <property type="evidence" value="ECO:0007669"/>
    <property type="project" value="TreeGrafter"/>
</dbReference>
<dbReference type="GO" id="GO:0003729">
    <property type="term" value="F:mRNA binding"/>
    <property type="evidence" value="ECO:0007669"/>
    <property type="project" value="TreeGrafter"/>
</dbReference>
<dbReference type="GO" id="GO:0003735">
    <property type="term" value="F:structural constituent of ribosome"/>
    <property type="evidence" value="ECO:0007669"/>
    <property type="project" value="InterPro"/>
</dbReference>
<dbReference type="GO" id="GO:0006412">
    <property type="term" value="P:translation"/>
    <property type="evidence" value="ECO:0007669"/>
    <property type="project" value="UniProtKB-UniRule"/>
</dbReference>
<dbReference type="CDD" id="cd00387">
    <property type="entry name" value="Ribosomal_L7_L12"/>
    <property type="match status" value="1"/>
</dbReference>
<dbReference type="FunFam" id="3.30.1390.10:FF:000001">
    <property type="entry name" value="50S ribosomal protein L7/L12"/>
    <property type="match status" value="1"/>
</dbReference>
<dbReference type="Gene3D" id="3.30.1390.10">
    <property type="match status" value="1"/>
</dbReference>
<dbReference type="Gene3D" id="1.20.5.710">
    <property type="entry name" value="Single helix bin"/>
    <property type="match status" value="1"/>
</dbReference>
<dbReference type="HAMAP" id="MF_00368">
    <property type="entry name" value="Ribosomal_bL12"/>
    <property type="match status" value="1"/>
</dbReference>
<dbReference type="InterPro" id="IPR000206">
    <property type="entry name" value="Ribosomal_bL12"/>
</dbReference>
<dbReference type="InterPro" id="IPR013823">
    <property type="entry name" value="Ribosomal_bL12_C"/>
</dbReference>
<dbReference type="InterPro" id="IPR014719">
    <property type="entry name" value="Ribosomal_bL12_C/ClpS-like"/>
</dbReference>
<dbReference type="InterPro" id="IPR008932">
    <property type="entry name" value="Ribosomal_bL12_oligo"/>
</dbReference>
<dbReference type="InterPro" id="IPR036235">
    <property type="entry name" value="Ribosomal_bL12_oligo_N_sf"/>
</dbReference>
<dbReference type="NCBIfam" id="TIGR00855">
    <property type="entry name" value="L12"/>
    <property type="match status" value="1"/>
</dbReference>
<dbReference type="PANTHER" id="PTHR45987">
    <property type="entry name" value="39S RIBOSOMAL PROTEIN L12"/>
    <property type="match status" value="1"/>
</dbReference>
<dbReference type="PANTHER" id="PTHR45987:SF4">
    <property type="entry name" value="LARGE RIBOSOMAL SUBUNIT PROTEIN BL12M"/>
    <property type="match status" value="1"/>
</dbReference>
<dbReference type="Pfam" id="PF00542">
    <property type="entry name" value="Ribosomal_L12"/>
    <property type="match status" value="1"/>
</dbReference>
<dbReference type="Pfam" id="PF16320">
    <property type="entry name" value="Ribosomal_L12_N"/>
    <property type="match status" value="1"/>
</dbReference>
<dbReference type="SUPFAM" id="SSF54736">
    <property type="entry name" value="ClpS-like"/>
    <property type="match status" value="1"/>
</dbReference>
<dbReference type="SUPFAM" id="SSF48300">
    <property type="entry name" value="Ribosomal protein L7/12, oligomerisation (N-terminal) domain"/>
    <property type="match status" value="1"/>
</dbReference>
<proteinExistence type="inferred from homology"/>
<comment type="function">
    <text evidence="1">Forms part of the ribosomal stalk which helps the ribosome interact with GTP-bound translation factors. Is thus essential for accurate translation.</text>
</comment>
<comment type="subunit">
    <text evidence="1">Homodimer. Part of the ribosomal stalk of the 50S ribosomal subunit. Forms a multimeric L10(L12)X complex, where L10 forms an elongated spine to which 2 to 4 L12 dimers bind in a sequential fashion. Binds GTP-bound translation factors.</text>
</comment>
<comment type="similarity">
    <text evidence="1">Belongs to the bacterial ribosomal protein bL12 family.</text>
</comment>
<keyword id="KW-0687">Ribonucleoprotein</keyword>
<keyword id="KW-0689">Ribosomal protein</keyword>
<sequence>MSITKEQILEAVSEMSVMNVVELISAMEKKFGVSANMSVNTNNNSEKSTIEEKTEFDIFLKSIGPNKVSVIKSVRSATGLGLKEAKDLVESAPTVLKENMSKNDAESLKKTLEDAGAEIEIK</sequence>
<gene>
    <name evidence="1" type="primary">rplL</name>
    <name type="ordered locus">BUsg_036</name>
</gene>
<protein>
    <recommendedName>
        <fullName evidence="1">Large ribosomal subunit protein bL12</fullName>
    </recommendedName>
    <alternativeName>
        <fullName evidence="2">50S ribosomal protein L7/L12</fullName>
    </alternativeName>
</protein>
<evidence type="ECO:0000255" key="1">
    <source>
        <dbReference type="HAMAP-Rule" id="MF_00368"/>
    </source>
</evidence>
<evidence type="ECO:0000305" key="2"/>
<reference key="1">
    <citation type="journal article" date="2002" name="Science">
        <title>50 million years of genomic stasis in endosymbiotic bacteria.</title>
        <authorList>
            <person name="Tamas I."/>
            <person name="Klasson L."/>
            <person name="Canbaeck B."/>
            <person name="Naeslund A.K."/>
            <person name="Eriksson A.-S."/>
            <person name="Wernegreen J.J."/>
            <person name="Sandstroem J.P."/>
            <person name="Moran N.A."/>
            <person name="Andersson S.G.E."/>
        </authorList>
    </citation>
    <scope>NUCLEOTIDE SEQUENCE [LARGE SCALE GENOMIC DNA]</scope>
    <source>
        <strain>Sg</strain>
    </source>
</reference>
<reference key="2">
    <citation type="journal article" date="1992" name="Curr. Microbiol.">
        <title>Sequence analysis of an aphid endosymbiont DNA fragment containing rpoB (beta-subunit of RNA polymerase) and portions of rplL and rpoC.</title>
        <authorList>
            <person name="Clark M.A."/>
            <person name="Baumann L."/>
            <person name="Baumann P."/>
        </authorList>
    </citation>
    <scope>NUCLEOTIDE SEQUENCE [GENOMIC DNA] OF 88-122</scope>
</reference>
<feature type="chain" id="PRO_0000157511" description="Large ribosomal subunit protein bL12">
    <location>
        <begin position="1"/>
        <end position="122"/>
    </location>
</feature>
<accession>P41188</accession>